<gene>
    <name type="primary">SPL2</name>
    <name type="ORF">SCY_2528</name>
</gene>
<organism>
    <name type="scientific">Saccharomyces cerevisiae (strain YJM789)</name>
    <name type="common">Baker's yeast</name>
    <dbReference type="NCBI Taxonomy" id="307796"/>
    <lineage>
        <taxon>Eukaryota</taxon>
        <taxon>Fungi</taxon>
        <taxon>Dikarya</taxon>
        <taxon>Ascomycota</taxon>
        <taxon>Saccharomycotina</taxon>
        <taxon>Saccharomycetes</taxon>
        <taxon>Saccharomycetales</taxon>
        <taxon>Saccharomycetaceae</taxon>
        <taxon>Saccharomyces</taxon>
    </lineage>
</organism>
<sequence>MRTYTPLIYNIYNVHIWVFTESQGQIGQMSPRGKMETAVSQGQHKQLKDGHQHKGRKLSEEIASLLRLKECRRLNPASYYTPRRTSQSQSLSGSTFKEYNEYVNEKDSSRAQRQNAAAVLSKLAHDFWENDCVIDEDIFEDSSDEEQS</sequence>
<comment type="function">
    <text>Putative cyclin-dependent kinase (CDK) inhibitor necessary and sufficient for PHO pathway-dependent down-regulation of low-affinity phosphate transport.</text>
</comment>
<comment type="subcellular location">
    <subcellularLocation>
        <location>Cytoplasmic granule</location>
    </subcellularLocation>
    <subcellularLocation>
        <location>Cytoplasm</location>
    </subcellularLocation>
</comment>
<comment type="induction">
    <text>Regulated by phosphate, probably through its PHO4-binding elements in the promoter.</text>
</comment>
<name>SLP2_YEAS7</name>
<reference key="1">
    <citation type="journal article" date="2007" name="Proc. Natl. Acad. Sci. U.S.A.">
        <title>Genome sequencing and comparative analysis of Saccharomyces cerevisiae strain YJM789.</title>
        <authorList>
            <person name="Wei W."/>
            <person name="McCusker J.H."/>
            <person name="Hyman R.W."/>
            <person name="Jones T."/>
            <person name="Ning Y."/>
            <person name="Cao Z."/>
            <person name="Gu Z."/>
            <person name="Bruno D."/>
            <person name="Miranda M."/>
            <person name="Nguyen M."/>
            <person name="Wilhelmy J."/>
            <person name="Komp C."/>
            <person name="Tamse R."/>
            <person name="Wang X."/>
            <person name="Jia P."/>
            <person name="Luedi P."/>
            <person name="Oefner P.J."/>
            <person name="David L."/>
            <person name="Dietrich F.S."/>
            <person name="Li Y."/>
            <person name="Davis R.W."/>
            <person name="Steinmetz L.M."/>
        </authorList>
    </citation>
    <scope>NUCLEOTIDE SEQUENCE [LARGE SCALE GENOMIC DNA]</scope>
    <source>
        <strain>YJM789</strain>
    </source>
</reference>
<accession>A6ZT44</accession>
<proteinExistence type="evidence at transcript level"/>
<feature type="chain" id="PRO_0000333463" description="Putative cyclin-dependent kinase inhibitor SPL2">
    <location>
        <begin position="1"/>
        <end position="148"/>
    </location>
</feature>
<feature type="modified residue" description="Phosphoserine" evidence="1">
    <location>
        <position position="59"/>
    </location>
</feature>
<feature type="modified residue" description="Phosphoserine" evidence="1">
    <location>
        <position position="86"/>
    </location>
</feature>
<evidence type="ECO:0000250" key="1">
    <source>
        <dbReference type="UniProtKB" id="P38839"/>
    </source>
</evidence>
<dbReference type="EMBL" id="AAFW02000082">
    <property type="protein sequence ID" value="EDN62375.1"/>
    <property type="molecule type" value="Genomic_DNA"/>
</dbReference>
<dbReference type="SMR" id="A6ZT44"/>
<dbReference type="HOGENOM" id="CLU_2051493_0_0_1"/>
<dbReference type="Proteomes" id="UP000007060">
    <property type="component" value="Unassembled WGS sequence"/>
</dbReference>
<dbReference type="GO" id="GO:0005737">
    <property type="term" value="C:cytoplasm"/>
    <property type="evidence" value="ECO:0007669"/>
    <property type="project" value="UniProtKB-SubCell"/>
</dbReference>
<dbReference type="GO" id="GO:0004860">
    <property type="term" value="F:protein kinase inhibitor activity"/>
    <property type="evidence" value="ECO:0007669"/>
    <property type="project" value="UniProtKB-KW"/>
</dbReference>
<keyword id="KW-0963">Cytoplasm</keyword>
<keyword id="KW-0597">Phosphoprotein</keyword>
<keyword id="KW-0649">Protein kinase inhibitor</keyword>
<protein>
    <recommendedName>
        <fullName>Putative cyclin-dependent kinase inhibitor SPL2</fullName>
    </recommendedName>
    <alternativeName>
        <fullName>Suppressor of PLC1 deletion protein 2</fullName>
    </alternativeName>
</protein>